<evidence type="ECO:0000250" key="1"/>
<evidence type="ECO:0000255" key="2"/>
<evidence type="ECO:0000255" key="3">
    <source>
        <dbReference type="PROSITE-ProRule" id="PRU00521"/>
    </source>
</evidence>
<accession>P22332</accession>
<protein>
    <recommendedName>
        <fullName>Red-sensitive opsin</fullName>
    </recommendedName>
    <alternativeName>
        <fullName>Red cone photoreceptor pigment</fullName>
    </alternativeName>
</protein>
<comment type="function">
    <text>Visual pigments are the light-absorbing molecules that mediate vision. They consist of an apoprotein, opsin, covalently linked to cis-retinal.</text>
</comment>
<comment type="subcellular location">
    <subcellularLocation>
        <location>Membrane</location>
        <topology>Multi-pass membrane protein</topology>
    </subcellularLocation>
</comment>
<comment type="tissue specificity">
    <text>The color pigments are found in the cone photoreceptor cells.</text>
</comment>
<comment type="PTM">
    <text evidence="1">Phosphorylated on some or all of the serine and threonine residues present in the C-terminal region.</text>
</comment>
<comment type="similarity">
    <text evidence="3">Belongs to the G-protein coupled receptor 1 family. Opsin subfamily.</text>
</comment>
<feature type="chain" id="PRO_0000197792" description="Red-sensitive opsin">
    <location>
        <begin position="1"/>
        <end position="357"/>
    </location>
</feature>
<feature type="topological domain" description="Extracellular" evidence="2">
    <location>
        <begin position="1"/>
        <end position="49"/>
    </location>
</feature>
<feature type="transmembrane region" description="Helical; Name=1" evidence="2">
    <location>
        <begin position="50"/>
        <end position="74"/>
    </location>
</feature>
<feature type="topological domain" description="Cytoplasmic" evidence="2">
    <location>
        <begin position="75"/>
        <end position="86"/>
    </location>
</feature>
<feature type="transmembrane region" description="Helical; Name=2" evidence="2">
    <location>
        <begin position="87"/>
        <end position="112"/>
    </location>
</feature>
<feature type="topological domain" description="Extracellular" evidence="2">
    <location>
        <begin position="113"/>
        <end position="126"/>
    </location>
</feature>
<feature type="transmembrane region" description="Helical; Name=3" evidence="2">
    <location>
        <begin position="127"/>
        <end position="146"/>
    </location>
</feature>
<feature type="topological domain" description="Cytoplasmic" evidence="2">
    <location>
        <begin position="147"/>
        <end position="165"/>
    </location>
</feature>
<feature type="transmembrane region" description="Helical; Name=4" evidence="2">
    <location>
        <begin position="166"/>
        <end position="189"/>
    </location>
</feature>
<feature type="topological domain" description="Extracellular" evidence="2">
    <location>
        <begin position="190"/>
        <end position="215"/>
    </location>
</feature>
<feature type="transmembrane region" description="Helical; Name=5" evidence="2">
    <location>
        <begin position="216"/>
        <end position="243"/>
    </location>
</feature>
<feature type="topological domain" description="Cytoplasmic" evidence="2">
    <location>
        <begin position="244"/>
        <end position="265"/>
    </location>
</feature>
<feature type="transmembrane region" description="Helical; Name=6" evidence="2">
    <location>
        <begin position="266"/>
        <end position="289"/>
    </location>
</feature>
<feature type="topological domain" description="Extracellular" evidence="2">
    <location>
        <begin position="290"/>
        <end position="297"/>
    </location>
</feature>
<feature type="transmembrane region" description="Helical; Name=7" evidence="2">
    <location>
        <begin position="298"/>
        <end position="322"/>
    </location>
</feature>
<feature type="topological domain" description="Cytoplasmic" evidence="2">
    <location>
        <begin position="323"/>
        <end position="357"/>
    </location>
</feature>
<feature type="modified residue" description="N6-(retinylidene)lysine">
    <location>
        <position position="309"/>
    </location>
</feature>
<feature type="glycosylation site" description="N-linked (GlcNAc...) asparagine" evidence="2">
    <location>
        <position position="31"/>
    </location>
</feature>
<feature type="disulfide bond" evidence="3">
    <location>
        <begin position="123"/>
        <end position="200"/>
    </location>
</feature>
<dbReference type="EMBL" id="M90075">
    <property type="protein sequence ID" value="AAA02766.1"/>
    <property type="molecule type" value="Genomic_DNA"/>
</dbReference>
<dbReference type="EMBL" id="M38630">
    <property type="protein sequence ID" value="AAA62672.1"/>
    <property type="molecule type" value="Genomic_DNA"/>
</dbReference>
<dbReference type="EMBL" id="M38625">
    <property type="protein sequence ID" value="AAA62672.1"/>
    <property type="status" value="JOINED"/>
    <property type="molecule type" value="Genomic_DNA"/>
</dbReference>
<dbReference type="EMBL" id="M38626">
    <property type="protein sequence ID" value="AAA62672.1"/>
    <property type="status" value="JOINED"/>
    <property type="molecule type" value="Genomic_DNA"/>
</dbReference>
<dbReference type="EMBL" id="M38627">
    <property type="protein sequence ID" value="AAA62672.1"/>
    <property type="status" value="JOINED"/>
    <property type="molecule type" value="Genomic_DNA"/>
</dbReference>
<dbReference type="EMBL" id="M38628">
    <property type="protein sequence ID" value="AAA62672.1"/>
    <property type="status" value="JOINED"/>
    <property type="molecule type" value="Genomic_DNA"/>
</dbReference>
<dbReference type="EMBL" id="M38629">
    <property type="protein sequence ID" value="AAA62672.1"/>
    <property type="status" value="JOINED"/>
    <property type="molecule type" value="Genomic_DNA"/>
</dbReference>
<dbReference type="PIR" id="A37440">
    <property type="entry name" value="A37440"/>
</dbReference>
<dbReference type="SMR" id="P22332"/>
<dbReference type="GlyCosmos" id="P22332">
    <property type="glycosylation" value="1 site, No reported glycans"/>
</dbReference>
<dbReference type="GO" id="GO:0016020">
    <property type="term" value="C:membrane"/>
    <property type="evidence" value="ECO:0007669"/>
    <property type="project" value="UniProtKB-SubCell"/>
</dbReference>
<dbReference type="GO" id="GO:0004930">
    <property type="term" value="F:G protein-coupled receptor activity"/>
    <property type="evidence" value="ECO:0007669"/>
    <property type="project" value="UniProtKB-KW"/>
</dbReference>
<dbReference type="GO" id="GO:0009881">
    <property type="term" value="F:photoreceptor activity"/>
    <property type="evidence" value="ECO:0007669"/>
    <property type="project" value="UniProtKB-KW"/>
</dbReference>
<dbReference type="GO" id="GO:0007602">
    <property type="term" value="P:phototransduction"/>
    <property type="evidence" value="ECO:0007669"/>
    <property type="project" value="UniProtKB-KW"/>
</dbReference>
<dbReference type="GO" id="GO:0007601">
    <property type="term" value="P:visual perception"/>
    <property type="evidence" value="ECO:0007669"/>
    <property type="project" value="UniProtKB-KW"/>
</dbReference>
<dbReference type="FunFam" id="1.20.1070.10:FF:000090">
    <property type="entry name" value="Long-wave-sensitive opsin 1"/>
    <property type="match status" value="1"/>
</dbReference>
<dbReference type="Gene3D" id="1.20.1070.10">
    <property type="entry name" value="Rhodopsin 7-helix transmembrane proteins"/>
    <property type="match status" value="1"/>
</dbReference>
<dbReference type="InterPro" id="IPR050125">
    <property type="entry name" value="GPCR_opsins"/>
</dbReference>
<dbReference type="InterPro" id="IPR000276">
    <property type="entry name" value="GPCR_Rhodpsn"/>
</dbReference>
<dbReference type="InterPro" id="IPR017452">
    <property type="entry name" value="GPCR_Rhodpsn_7TM"/>
</dbReference>
<dbReference type="InterPro" id="IPR001760">
    <property type="entry name" value="Opsin"/>
</dbReference>
<dbReference type="InterPro" id="IPR000378">
    <property type="entry name" value="Opsin_red/grn"/>
</dbReference>
<dbReference type="InterPro" id="IPR027430">
    <property type="entry name" value="Retinal_BS"/>
</dbReference>
<dbReference type="PANTHER" id="PTHR24240">
    <property type="entry name" value="OPSIN"/>
    <property type="match status" value="1"/>
</dbReference>
<dbReference type="Pfam" id="PF00001">
    <property type="entry name" value="7tm_1"/>
    <property type="match status" value="1"/>
</dbReference>
<dbReference type="PRINTS" id="PR00237">
    <property type="entry name" value="GPCRRHODOPSN"/>
</dbReference>
<dbReference type="PRINTS" id="PR00238">
    <property type="entry name" value="OPSIN"/>
</dbReference>
<dbReference type="PRINTS" id="PR00575">
    <property type="entry name" value="OPSINREDGRN"/>
</dbReference>
<dbReference type="SMART" id="SM01381">
    <property type="entry name" value="7TM_GPCR_Srsx"/>
    <property type="match status" value="1"/>
</dbReference>
<dbReference type="SUPFAM" id="SSF81321">
    <property type="entry name" value="Family A G protein-coupled receptor-like"/>
    <property type="match status" value="1"/>
</dbReference>
<dbReference type="PROSITE" id="PS00237">
    <property type="entry name" value="G_PROTEIN_RECEP_F1_1"/>
    <property type="match status" value="1"/>
</dbReference>
<dbReference type="PROSITE" id="PS50262">
    <property type="entry name" value="G_PROTEIN_RECEP_F1_2"/>
    <property type="match status" value="1"/>
</dbReference>
<dbReference type="PROSITE" id="PS00238">
    <property type="entry name" value="OPSIN"/>
    <property type="match status" value="1"/>
</dbReference>
<reference key="1">
    <citation type="journal article" date="1993" name="Mol. Biol. Evol.">
        <title>Paralogous origin of the red- and green-sensitive visual pigment genes in vertebrates.</title>
        <authorList>
            <person name="Yokoyama R."/>
            <person name="Yokoyama S."/>
        </authorList>
    </citation>
    <scope>NUCLEOTIDE SEQUENCE [GENOMIC DNA]</scope>
</reference>
<reference key="2">
    <citation type="journal article" date="1990" name="Proc. Natl. Acad. Sci. U.S.A.">
        <title>Convergent evolution of the red- and green-like visual pigment genes in fish, Astyanax fasciatus, and human.</title>
        <authorList>
            <person name="Yokoyama R."/>
            <person name="Yokoyama S."/>
        </authorList>
    </citation>
    <scope>NUCLEOTIDE SEQUENCE [GENOMIC DNA]</scope>
    <source>
        <tissue>Pineal gland</tissue>
    </source>
</reference>
<sequence length="357" mass="39837">MGDQWGDAVFAARRRGDDTTREAAFTYTNSNNTKDPFEGPNYHIAPRWVYNLATCWMFFVVVASTVTNGLVLVASAKFKKLRHPLNWILVNLAIADLLETLLASTISVCNQFFGYFILGHPMCVFEGFTVATCGIAGLWSLTVISWERWVVVCKPFGNVKFDGKMATAGIVFTWVWSAVWCAPPIFGWSRYWPHGLKTSCGPDVFSGSEDPGVQSYMIVLMITCCFIPLGIIILCYIAVWWAIRTVAQQQKDSESTQKAEKEVSRMVVVMIMAYCFCWGPYTFFACFAAANPGYAFHPLAAAMPAYFAKSATIYNPVIYVFMNRQFRVCIMQLFGKKVDDGSEVSTSKTEVSSVAPA</sequence>
<name>OPSR_PSAFA</name>
<proteinExistence type="evidence at protein level"/>
<keyword id="KW-0157">Chromophore</keyword>
<keyword id="KW-1015">Disulfide bond</keyword>
<keyword id="KW-0297">G-protein coupled receptor</keyword>
<keyword id="KW-0325">Glycoprotein</keyword>
<keyword id="KW-0472">Membrane</keyword>
<keyword id="KW-0597">Phosphoprotein</keyword>
<keyword id="KW-0600">Photoreceptor protein</keyword>
<keyword id="KW-0675">Receptor</keyword>
<keyword id="KW-0681">Retinal protein</keyword>
<keyword id="KW-0716">Sensory transduction</keyword>
<keyword id="KW-0807">Transducer</keyword>
<keyword id="KW-0812">Transmembrane</keyword>
<keyword id="KW-1133">Transmembrane helix</keyword>
<keyword id="KW-0844">Vision</keyword>
<organism>
    <name type="scientific">Psalidodon fasciatus</name>
    <name type="common">Banded astyanax</name>
    <name type="synonym">Astyanax fasciatus</name>
    <dbReference type="NCBI Taxonomy" id="223369"/>
    <lineage>
        <taxon>Eukaryota</taxon>
        <taxon>Metazoa</taxon>
        <taxon>Chordata</taxon>
        <taxon>Craniata</taxon>
        <taxon>Vertebrata</taxon>
        <taxon>Euteleostomi</taxon>
        <taxon>Actinopterygii</taxon>
        <taxon>Neopterygii</taxon>
        <taxon>Teleostei</taxon>
        <taxon>Ostariophysi</taxon>
        <taxon>Characiformes</taxon>
        <taxon>Characoidei</taxon>
        <taxon>Acestrorhamphidae</taxon>
        <taxon>Acestrorhamphidae polyphyletic genera</taxon>
        <taxon>Psalidodon</taxon>
    </lineage>
</organism>
<gene>
    <name type="primary">R007</name>
</gene>